<accession>Q7KWU0</accession>
<accession>Q559I1</accession>
<organism>
    <name type="scientific">Dictyostelium discoideum</name>
    <name type="common">Social amoeba</name>
    <dbReference type="NCBI Taxonomy" id="44689"/>
    <lineage>
        <taxon>Eukaryota</taxon>
        <taxon>Amoebozoa</taxon>
        <taxon>Evosea</taxon>
        <taxon>Eumycetozoa</taxon>
        <taxon>Dictyostelia</taxon>
        <taxon>Dictyosteliales</taxon>
        <taxon>Dictyosteliaceae</taxon>
        <taxon>Dictyostelium</taxon>
    </lineage>
</organism>
<proteinExistence type="evidence at protein level"/>
<reference key="1">
    <citation type="journal article" date="2016" name="Proc. Natl. Acad. Sci. U.S.A.">
        <title>Terpene synthase genes in eukaryotes beyond plants and fungi: Occurrence in social amoebae.</title>
        <authorList>
            <person name="Chen X."/>
            <person name="Koellner T.G."/>
            <person name="Jia Q."/>
            <person name="Norris A."/>
            <person name="Santhanam B."/>
            <person name="Rabe P."/>
            <person name="Dickschat J.S."/>
            <person name="Shaulsky G."/>
            <person name="Gershenzon J."/>
            <person name="Chen F."/>
        </authorList>
    </citation>
    <scope>NUCLEOTIDE SEQUENCE [MRNA]</scope>
    <scope>INDUCTION</scope>
    <scope>FUNCTION</scope>
    <scope>CATALYTIC ACTIVITY</scope>
    <scope>DOMAIN</scope>
    <source>
        <strain>AX4</strain>
    </source>
</reference>
<reference key="2">
    <citation type="journal article" date="2002" name="Nature">
        <title>Sequence and analysis of chromosome 2 of Dictyostelium discoideum.</title>
        <authorList>
            <person name="Gloeckner G."/>
            <person name="Eichinger L."/>
            <person name="Szafranski K."/>
            <person name="Pachebat J.A."/>
            <person name="Bankier A.T."/>
            <person name="Dear P.H."/>
            <person name="Lehmann R."/>
            <person name="Baumgart C."/>
            <person name="Parra G."/>
            <person name="Abril J.F."/>
            <person name="Guigo R."/>
            <person name="Kumpf K."/>
            <person name="Tunggal B."/>
            <person name="Cox E.C."/>
            <person name="Quail M.A."/>
            <person name="Platzer M."/>
            <person name="Rosenthal A."/>
            <person name="Noegel A.A."/>
        </authorList>
    </citation>
    <scope>NUCLEOTIDE SEQUENCE [LARGE SCALE GENOMIC DNA]</scope>
    <source>
        <strain>AX4</strain>
    </source>
</reference>
<reference key="3">
    <citation type="journal article" date="2005" name="Nature">
        <title>The genome of the social amoeba Dictyostelium discoideum.</title>
        <authorList>
            <person name="Eichinger L."/>
            <person name="Pachebat J.A."/>
            <person name="Gloeckner G."/>
            <person name="Rajandream M.A."/>
            <person name="Sucgang R."/>
            <person name="Berriman M."/>
            <person name="Song J."/>
            <person name="Olsen R."/>
            <person name="Szafranski K."/>
            <person name="Xu Q."/>
            <person name="Tunggal B."/>
            <person name="Kummerfeld S."/>
            <person name="Madera M."/>
            <person name="Konfortov B.A."/>
            <person name="Rivero F."/>
            <person name="Bankier A.T."/>
            <person name="Lehmann R."/>
            <person name="Hamlin N."/>
            <person name="Davies R."/>
            <person name="Gaudet P."/>
            <person name="Fey P."/>
            <person name="Pilcher K."/>
            <person name="Chen G."/>
            <person name="Saunders D."/>
            <person name="Sodergren E.J."/>
            <person name="Davis P."/>
            <person name="Kerhornou A."/>
            <person name="Nie X."/>
            <person name="Hall N."/>
            <person name="Anjard C."/>
            <person name="Hemphill L."/>
            <person name="Bason N."/>
            <person name="Farbrother P."/>
            <person name="Desany B."/>
            <person name="Just E."/>
            <person name="Morio T."/>
            <person name="Rost R."/>
            <person name="Churcher C.M."/>
            <person name="Cooper J."/>
            <person name="Haydock S."/>
            <person name="van Driessche N."/>
            <person name="Cronin A."/>
            <person name="Goodhead I."/>
            <person name="Muzny D.M."/>
            <person name="Mourier T."/>
            <person name="Pain A."/>
            <person name="Lu M."/>
            <person name="Harper D."/>
            <person name="Lindsay R."/>
            <person name="Hauser H."/>
            <person name="James K.D."/>
            <person name="Quiles M."/>
            <person name="Madan Babu M."/>
            <person name="Saito T."/>
            <person name="Buchrieser C."/>
            <person name="Wardroper A."/>
            <person name="Felder M."/>
            <person name="Thangavelu M."/>
            <person name="Johnson D."/>
            <person name="Knights A."/>
            <person name="Loulseged H."/>
            <person name="Mungall K.L."/>
            <person name="Oliver K."/>
            <person name="Price C."/>
            <person name="Quail M.A."/>
            <person name="Urushihara H."/>
            <person name="Hernandez J."/>
            <person name="Rabbinowitsch E."/>
            <person name="Steffen D."/>
            <person name="Sanders M."/>
            <person name="Ma J."/>
            <person name="Kohara Y."/>
            <person name="Sharp S."/>
            <person name="Simmonds M.N."/>
            <person name="Spiegler S."/>
            <person name="Tivey A."/>
            <person name="Sugano S."/>
            <person name="White B."/>
            <person name="Walker D."/>
            <person name="Woodward J.R."/>
            <person name="Winckler T."/>
            <person name="Tanaka Y."/>
            <person name="Shaulsky G."/>
            <person name="Schleicher M."/>
            <person name="Weinstock G.M."/>
            <person name="Rosenthal A."/>
            <person name="Cox E.C."/>
            <person name="Chisholm R.L."/>
            <person name="Gibbs R.A."/>
            <person name="Loomis W.F."/>
            <person name="Platzer M."/>
            <person name="Kay R.R."/>
            <person name="Williams J.G."/>
            <person name="Dear P.H."/>
            <person name="Noegel A.A."/>
            <person name="Barrell B.G."/>
            <person name="Kuspa A."/>
        </authorList>
    </citation>
    <scope>NUCLEOTIDE SEQUENCE [LARGE SCALE GENOMIC DNA]</scope>
    <source>
        <strain>AX4</strain>
    </source>
</reference>
<reference key="4">
    <citation type="journal article" date="2016" name="Angew. Chem. Int. Ed.">
        <title>Terpene cyclases from social amoebae.</title>
        <authorList>
            <person name="Rabe P."/>
            <person name="Rinkel J."/>
            <person name="Nubbemeyer B."/>
            <person name="Koellner T.G."/>
            <person name="Chen F."/>
            <person name="Dickschat J.S."/>
        </authorList>
    </citation>
    <scope>FUNCTION</scope>
    <scope>CATALYTIC ACTIVITY</scope>
</reference>
<sequence>MDIKNLSLKDIKFPKSWETKPSKIEYMQFVYQEAIDMKVWRKDNEIDILTHHHVTDLSRFFWPNADFEGLVLGAELMVWFFAFDDLFDGGFIDDNENEQYRLVNRMNKVFLEGTIEDDSTGAERMGYYLRNKVRAICGEKRQSTFHRFNSSCVQWVDSIIPFIKLKRNQKSLDFNLYIHHRKFNIGAIPCFLVSEIILDPMSNIECFIWLDSRWIKMSEIICEIIALVNDCVSYEKEIKENGAPLNSLKFIQIEKNLNLQESFEYISNYLNELINQYIELETSFIKSYKPITSNYNSNFIAIVEHLHNMSFANVSWSTQTPRYLSQTQPFLELRRNKKIITKIYDLKNK</sequence>
<gene>
    <name evidence="4" type="primary">TPS2</name>
    <name type="ORF">DDB0168859</name>
</gene>
<comment type="function">
    <text evidence="2 3">Terpene synthase that converts its substrate farnesyl diphosphate (FPP) into the sesquiterpene (3S)-(+)-asterisca-2(9),6-diene (PubMed:27790999, PubMed:27862766). Is also able to convert geranyl diphosphate (GPP) into a mixture of monoterpenes including (Z)-beta-ocimene, allo-ocimene and linalool (PubMed:27790999).</text>
</comment>
<comment type="catalytic activity">
    <reaction evidence="3">
        <text>(2E,6E)-farnesyl diphosphate = (3S)-(+)-asterisca-2(9),6-diene + diphosphate</text>
        <dbReference type="Rhea" id="RHEA:53632"/>
        <dbReference type="ChEBI" id="CHEBI:33019"/>
        <dbReference type="ChEBI" id="CHEBI:137531"/>
        <dbReference type="ChEBI" id="CHEBI:175763"/>
        <dbReference type="EC" id="4.2.3.161"/>
    </reaction>
    <physiologicalReaction direction="left-to-right" evidence="3">
        <dbReference type="Rhea" id="RHEA:53633"/>
    </physiologicalReaction>
</comment>
<comment type="catalytic activity">
    <reaction evidence="2">
        <text>(2E)-geranyl diphosphate = (Z)-beta-ocimene + diphosphate</text>
        <dbReference type="Rhea" id="RHEA:68824"/>
        <dbReference type="ChEBI" id="CHEBI:33019"/>
        <dbReference type="ChEBI" id="CHEBI:58057"/>
        <dbReference type="ChEBI" id="CHEBI:87574"/>
    </reaction>
    <physiologicalReaction direction="left-to-right" evidence="2">
        <dbReference type="Rhea" id="RHEA:68825"/>
    </physiologicalReaction>
</comment>
<comment type="catalytic activity">
    <reaction evidence="2">
        <text>(2E)-geranyl diphosphate + H2O = linalool + diphosphate</text>
        <dbReference type="Rhea" id="RHEA:68708"/>
        <dbReference type="ChEBI" id="CHEBI:15377"/>
        <dbReference type="ChEBI" id="CHEBI:17580"/>
        <dbReference type="ChEBI" id="CHEBI:33019"/>
        <dbReference type="ChEBI" id="CHEBI:58057"/>
    </reaction>
    <physiologicalReaction direction="left-to-right" evidence="2">
        <dbReference type="Rhea" id="RHEA:68709"/>
    </physiologicalReaction>
</comment>
<comment type="induction">
    <text evidence="2">Expression is detectable but at low levels in vegetatively growing cells and increases during development induced by starvation (PubMed:27790999). Expression is highest during slug formation (approximately 16 hours after induction) (PubMed:27790999). Expression decreases during culmination (from 18 to 24 hours after induction) (PubMed:27790999).</text>
</comment>
<comment type="domain">
    <text evidence="6">Contains several highly conserved motifs that are important for catalytic activity including the aspartate-rich 'DDxx(x)D/E' motif and the 'NDxxSxxxD/E' motif, both of which are involved in complexing metal ions to coordinate the binding of the isoprenyl diphosphate substrate in the active site.</text>
</comment>
<comment type="similarity">
    <text evidence="5">Belongs to the terpene synthase family.</text>
</comment>
<keyword id="KW-0456">Lyase</keyword>
<keyword id="KW-0479">Metal-binding</keyword>
<evidence type="ECO:0000250" key="1">
    <source>
        <dbReference type="UniProtKB" id="Q54BE5"/>
    </source>
</evidence>
<evidence type="ECO:0000269" key="2">
    <source>
    </source>
</evidence>
<evidence type="ECO:0000269" key="3">
    <source>
    </source>
</evidence>
<evidence type="ECO:0000303" key="4">
    <source>
    </source>
</evidence>
<evidence type="ECO:0000305" key="5"/>
<evidence type="ECO:0000305" key="6">
    <source>
    </source>
</evidence>
<feature type="chain" id="PRO_0000456818" description="Terpene synthase 2">
    <location>
        <begin position="1"/>
        <end position="349"/>
    </location>
</feature>
<feature type="short sequence motif" description="DDxx(x)D/E motif" evidence="1">
    <location>
        <begin position="84"/>
        <end position="89"/>
    </location>
</feature>
<feature type="short sequence motif" description="NDxxSxxxD/E motif" evidence="1">
    <location>
        <begin position="229"/>
        <end position="237"/>
    </location>
</feature>
<name>TPS2_DICDI</name>
<protein>
    <recommendedName>
        <fullName evidence="4">Terpene synthase 2</fullName>
        <ecNumber evidence="2">4.2.3.-</ecNumber>
        <ecNumber evidence="3">4.2.3.161</ecNumber>
    </recommendedName>
</protein>
<dbReference type="EC" id="4.2.3.-" evidence="2"/>
<dbReference type="EC" id="4.2.3.161" evidence="3"/>
<dbReference type="EMBL" id="KX364375">
    <property type="protein sequence ID" value="APC23386.1"/>
    <property type="molecule type" value="mRNA"/>
</dbReference>
<dbReference type="EMBL" id="AAFI01000021">
    <property type="protein sequence ID" value="EAL71179.1"/>
    <property type="molecule type" value="Genomic_DNA"/>
</dbReference>
<dbReference type="RefSeq" id="XP_645125.1">
    <property type="nucleotide sequence ID" value="XM_640033.1"/>
</dbReference>
<dbReference type="SMR" id="Q7KWU0"/>
<dbReference type="PaxDb" id="44689-DDB0168859"/>
<dbReference type="KEGG" id="ddi:DDB_G0272510"/>
<dbReference type="dictyBase" id="DDB_G0272510">
    <property type="gene designation" value="tps2"/>
</dbReference>
<dbReference type="VEuPathDB" id="AmoebaDB:DDB_G0272510"/>
<dbReference type="HOGENOM" id="CLU_070708_0_0_1"/>
<dbReference type="InParanoid" id="Q7KWU0"/>
<dbReference type="BRENDA" id="4.2.3.161">
    <property type="organism ID" value="1939"/>
</dbReference>
<dbReference type="PRO" id="PR:Q7KWU0"/>
<dbReference type="GO" id="GO:0120086">
    <property type="term" value="F:(3S)-(+)-asterisca-2(9),6-diene synthase activity"/>
    <property type="evidence" value="ECO:0000314"/>
    <property type="project" value="dictyBase"/>
</dbReference>
<dbReference type="GO" id="GO:0046872">
    <property type="term" value="F:metal ion binding"/>
    <property type="evidence" value="ECO:0007669"/>
    <property type="project" value="UniProtKB-KW"/>
</dbReference>
<dbReference type="GO" id="GO:0010334">
    <property type="term" value="F:sesquiterpene synthase activity"/>
    <property type="evidence" value="ECO:0000314"/>
    <property type="project" value="dictyBase"/>
</dbReference>
<dbReference type="GO" id="GO:0010333">
    <property type="term" value="F:terpene synthase activity"/>
    <property type="evidence" value="ECO:0000318"/>
    <property type="project" value="GO_Central"/>
</dbReference>
<dbReference type="GO" id="GO:0051762">
    <property type="term" value="P:sesquiterpene biosynthetic process"/>
    <property type="evidence" value="ECO:0000304"/>
    <property type="project" value="dictyBase"/>
</dbReference>
<dbReference type="CDD" id="cd00687">
    <property type="entry name" value="Terpene_cyclase_nonplant_C1"/>
    <property type="match status" value="1"/>
</dbReference>
<dbReference type="FunFam" id="1.10.600.10:FF:000047">
    <property type="entry name" value="Terpene synthase"/>
    <property type="match status" value="1"/>
</dbReference>
<dbReference type="Gene3D" id="1.10.600.10">
    <property type="entry name" value="Farnesyl Diphosphate Synthase"/>
    <property type="match status" value="1"/>
</dbReference>
<dbReference type="InterPro" id="IPR008949">
    <property type="entry name" value="Isoprenoid_synthase_dom_sf"/>
</dbReference>
<dbReference type="InterPro" id="IPR034686">
    <property type="entry name" value="Terpene_cyclase-like_2"/>
</dbReference>
<dbReference type="PANTHER" id="PTHR35201">
    <property type="entry name" value="TERPENE SYNTHASE"/>
    <property type="match status" value="1"/>
</dbReference>
<dbReference type="PANTHER" id="PTHR35201:SF3">
    <property type="entry name" value="TERPENE SYNTHASE 2-RELATED"/>
    <property type="match status" value="1"/>
</dbReference>
<dbReference type="Pfam" id="PF19086">
    <property type="entry name" value="Terpene_syn_C_2"/>
    <property type="match status" value="1"/>
</dbReference>
<dbReference type="SUPFAM" id="SSF48576">
    <property type="entry name" value="Terpenoid synthases"/>
    <property type="match status" value="1"/>
</dbReference>